<organism>
    <name type="scientific">Escherichia coli (strain K12)</name>
    <dbReference type="NCBI Taxonomy" id="83333"/>
    <lineage>
        <taxon>Bacteria</taxon>
        <taxon>Pseudomonadati</taxon>
        <taxon>Pseudomonadota</taxon>
        <taxon>Gammaproteobacteria</taxon>
        <taxon>Enterobacterales</taxon>
        <taxon>Enterobacteriaceae</taxon>
        <taxon>Escherichia</taxon>
    </lineage>
</organism>
<evidence type="ECO:0000255" key="1">
    <source>
        <dbReference type="HAMAP-Rule" id="MF_00197"/>
    </source>
</evidence>
<evidence type="ECO:0000269" key="2">
    <source>
    </source>
</evidence>
<evidence type="ECO:0000269" key="3">
    <source>
    </source>
</evidence>
<evidence type="ECO:0000269" key="4">
    <source>
    </source>
</evidence>
<evidence type="ECO:0000269" key="5">
    <source>
    </source>
</evidence>
<evidence type="ECO:0000269" key="6">
    <source>
    </source>
</evidence>
<evidence type="ECO:0000269" key="7">
    <source>
    </source>
</evidence>
<evidence type="ECO:0000303" key="8">
    <source>
    </source>
</evidence>
<evidence type="ECO:0000305" key="9"/>
<evidence type="ECO:0000305" key="10">
    <source>
    </source>
</evidence>
<evidence type="ECO:0007829" key="11">
    <source>
        <dbReference type="PDB" id="4IJZ"/>
    </source>
</evidence>
<evidence type="ECO:0007829" key="12">
    <source>
        <dbReference type="PDB" id="4IK0"/>
    </source>
</evidence>
<evidence type="ECO:0007829" key="13">
    <source>
        <dbReference type="PDB" id="6D1V"/>
    </source>
</evidence>
<evidence type="ECO:0007829" key="14">
    <source>
        <dbReference type="PDB" id="6VCK"/>
    </source>
</evidence>
<dbReference type="EC" id="5.1.1.7" evidence="5 7"/>
<dbReference type="EMBL" id="X12968">
    <property type="protein sequence ID" value="CAA31413.1"/>
    <property type="status" value="ALT_INIT"/>
    <property type="molecule type" value="Genomic_DNA"/>
</dbReference>
<dbReference type="EMBL" id="M87049">
    <property type="protein sequence ID" value="AAA67605.1"/>
    <property type="status" value="ALT_INIT"/>
    <property type="molecule type" value="Genomic_DNA"/>
</dbReference>
<dbReference type="EMBL" id="U00096">
    <property type="protein sequence ID" value="AAC76812.2"/>
    <property type="molecule type" value="Genomic_DNA"/>
</dbReference>
<dbReference type="EMBL" id="AP009048">
    <property type="protein sequence ID" value="BAE77491.1"/>
    <property type="molecule type" value="Genomic_DNA"/>
</dbReference>
<dbReference type="EMBL" id="M38257">
    <property type="protein sequence ID" value="AAA24761.1"/>
    <property type="molecule type" value="Genomic_DNA"/>
</dbReference>
<dbReference type="EMBL" id="X66782">
    <property type="protein sequence ID" value="CAA47282.1"/>
    <property type="molecule type" value="Genomic_DNA"/>
</dbReference>
<dbReference type="PIR" id="B65185">
    <property type="entry name" value="S01913"/>
</dbReference>
<dbReference type="RefSeq" id="NP_418254.2">
    <property type="nucleotide sequence ID" value="NC_000913.3"/>
</dbReference>
<dbReference type="RefSeq" id="WP_001160654.1">
    <property type="nucleotide sequence ID" value="NZ_STEB01000021.1"/>
</dbReference>
<dbReference type="PDB" id="4IJZ">
    <property type="method" value="X-ray"/>
    <property type="resolution" value="2.00 A"/>
    <property type="chains" value="A/B=1-274"/>
</dbReference>
<dbReference type="PDB" id="4IK0">
    <property type="method" value="X-ray"/>
    <property type="resolution" value="2.05 A"/>
    <property type="chains" value="A/B=1-274"/>
</dbReference>
<dbReference type="PDB" id="5YGU">
    <property type="method" value="X-ray"/>
    <property type="resolution" value="2.30 A"/>
    <property type="chains" value="A=1-274"/>
</dbReference>
<dbReference type="PDB" id="6D13">
    <property type="method" value="X-ray"/>
    <property type="resolution" value="3.06 A"/>
    <property type="chains" value="A=1-274"/>
</dbReference>
<dbReference type="PDB" id="6D1Q">
    <property type="method" value="X-ray"/>
    <property type="resolution" value="2.15 A"/>
    <property type="chains" value="A=1-274"/>
</dbReference>
<dbReference type="PDB" id="6D1V">
    <property type="method" value="X-ray"/>
    <property type="resolution" value="1.81 A"/>
    <property type="chains" value="A=1-274"/>
</dbReference>
<dbReference type="PDB" id="6VCK">
    <property type="method" value="X-ray"/>
    <property type="resolution" value="2.69 A"/>
    <property type="chains" value="A=1-274"/>
</dbReference>
<dbReference type="PDB" id="6VCL">
    <property type="method" value="X-ray"/>
    <property type="resolution" value="2.06 A"/>
    <property type="chains" value="A=1-274"/>
</dbReference>
<dbReference type="PDB" id="6VCM">
    <property type="method" value="X-ray"/>
    <property type="resolution" value="2.35 A"/>
    <property type="chains" value="A=1-274"/>
</dbReference>
<dbReference type="PDBsum" id="4IJZ"/>
<dbReference type="PDBsum" id="4IK0"/>
<dbReference type="PDBsum" id="5YGU"/>
<dbReference type="PDBsum" id="6D13"/>
<dbReference type="PDBsum" id="6D1Q"/>
<dbReference type="PDBsum" id="6D1V"/>
<dbReference type="PDBsum" id="6VCK"/>
<dbReference type="PDBsum" id="6VCL"/>
<dbReference type="PDBsum" id="6VCM"/>
<dbReference type="SMR" id="P0A6K1"/>
<dbReference type="BioGRID" id="4263254">
    <property type="interactions" value="11"/>
</dbReference>
<dbReference type="DIP" id="DIP-47856N"/>
<dbReference type="FunCoup" id="P0A6K1">
    <property type="interactions" value="846"/>
</dbReference>
<dbReference type="IntAct" id="P0A6K1">
    <property type="interactions" value="2"/>
</dbReference>
<dbReference type="STRING" id="511145.b3809"/>
<dbReference type="jPOST" id="P0A6K1"/>
<dbReference type="PaxDb" id="511145-b3809"/>
<dbReference type="EnsemblBacteria" id="AAC76812">
    <property type="protein sequence ID" value="AAC76812"/>
    <property type="gene ID" value="b3809"/>
</dbReference>
<dbReference type="GeneID" id="93778134"/>
<dbReference type="GeneID" id="948364"/>
<dbReference type="KEGG" id="ecj:JW5592"/>
<dbReference type="KEGG" id="eco:b3809"/>
<dbReference type="KEGG" id="ecoc:C3026_20620"/>
<dbReference type="PATRIC" id="fig|511145.12.peg.3925"/>
<dbReference type="EchoBASE" id="EB0205"/>
<dbReference type="eggNOG" id="COG0253">
    <property type="taxonomic scope" value="Bacteria"/>
</dbReference>
<dbReference type="HOGENOM" id="CLU_053306_1_1_6"/>
<dbReference type="InParanoid" id="P0A6K1"/>
<dbReference type="OMA" id="GIRCFAR"/>
<dbReference type="OrthoDB" id="9805408at2"/>
<dbReference type="PhylomeDB" id="P0A6K1"/>
<dbReference type="BioCyc" id="EcoCyc:DIAMINOPIMEPIM-MONOMER"/>
<dbReference type="BioCyc" id="MetaCyc:DIAMINOPIMEPIM-MONOMER"/>
<dbReference type="SABIO-RK" id="P0A6K1"/>
<dbReference type="UniPathway" id="UPA00034">
    <property type="reaction ID" value="UER00025"/>
</dbReference>
<dbReference type="EvolutionaryTrace" id="P0A6K1"/>
<dbReference type="PRO" id="PR:P0A6K1"/>
<dbReference type="Proteomes" id="UP000000625">
    <property type="component" value="Chromosome"/>
</dbReference>
<dbReference type="GO" id="GO:0005829">
    <property type="term" value="C:cytosol"/>
    <property type="evidence" value="ECO:0000314"/>
    <property type="project" value="EcoCyc"/>
</dbReference>
<dbReference type="GO" id="GO:0008837">
    <property type="term" value="F:diaminopimelate epimerase activity"/>
    <property type="evidence" value="ECO:0000314"/>
    <property type="project" value="EcoCyc"/>
</dbReference>
<dbReference type="GO" id="GO:0008047">
    <property type="term" value="F:enzyme activator activity"/>
    <property type="evidence" value="ECO:0000314"/>
    <property type="project" value="EcoCyc"/>
</dbReference>
<dbReference type="GO" id="GO:0042803">
    <property type="term" value="F:protein homodimerization activity"/>
    <property type="evidence" value="ECO:0000314"/>
    <property type="project" value="EcoCyc"/>
</dbReference>
<dbReference type="GO" id="GO:0009089">
    <property type="term" value="P:lysine biosynthetic process via diaminopimelate"/>
    <property type="evidence" value="ECO:0000318"/>
    <property type="project" value="GO_Central"/>
</dbReference>
<dbReference type="FunFam" id="3.10.310.10:FF:000001">
    <property type="entry name" value="Diaminopimelate epimerase"/>
    <property type="match status" value="1"/>
</dbReference>
<dbReference type="FunFam" id="3.10.310.10:FF:000002">
    <property type="entry name" value="Diaminopimelate epimerase"/>
    <property type="match status" value="1"/>
</dbReference>
<dbReference type="Gene3D" id="3.10.310.10">
    <property type="entry name" value="Diaminopimelate Epimerase, Chain A, domain 1"/>
    <property type="match status" value="2"/>
</dbReference>
<dbReference type="HAMAP" id="MF_00197">
    <property type="entry name" value="DAP_epimerase"/>
    <property type="match status" value="1"/>
</dbReference>
<dbReference type="InterPro" id="IPR018510">
    <property type="entry name" value="DAP_epimerase_AS"/>
</dbReference>
<dbReference type="InterPro" id="IPR001653">
    <property type="entry name" value="DAP_epimerase_DapF"/>
</dbReference>
<dbReference type="NCBIfam" id="TIGR00652">
    <property type="entry name" value="DapF"/>
    <property type="match status" value="1"/>
</dbReference>
<dbReference type="PANTHER" id="PTHR31689:SF0">
    <property type="entry name" value="DIAMINOPIMELATE EPIMERASE"/>
    <property type="match status" value="1"/>
</dbReference>
<dbReference type="PANTHER" id="PTHR31689">
    <property type="entry name" value="DIAMINOPIMELATE EPIMERASE, CHLOROPLASTIC"/>
    <property type="match status" value="1"/>
</dbReference>
<dbReference type="Pfam" id="PF01678">
    <property type="entry name" value="DAP_epimerase"/>
    <property type="match status" value="2"/>
</dbReference>
<dbReference type="SUPFAM" id="SSF54506">
    <property type="entry name" value="Diaminopimelate epimerase-like"/>
    <property type="match status" value="1"/>
</dbReference>
<dbReference type="PROSITE" id="PS01326">
    <property type="entry name" value="DAP_EPIMERASE"/>
    <property type="match status" value="1"/>
</dbReference>
<accession>P0A6K1</accession>
<accession>P08885</accession>
<accession>P78126</accession>
<accession>Q2M8B5</accession>
<accession>Q8X8P8</accession>
<reference key="1">
    <citation type="journal article" date="1988" name="Nucleic Acids Res.">
        <title>Nucleotide sequence of the dapF gene and flanking regions from Escherichia coli K12.</title>
        <authorList>
            <person name="Richaud C."/>
            <person name="Printz C."/>
        </authorList>
    </citation>
    <scope>NUCLEOTIDE SEQUENCE [GENOMIC DNA]</scope>
    <source>
        <strain>K12</strain>
    </source>
</reference>
<reference key="2">
    <citation type="journal article" date="1992" name="Science">
        <title>Analysis of the Escherichia coli genome: DNA sequence of the region from 84.5 to 86.5 minutes.</title>
        <authorList>
            <person name="Daniels D.L."/>
            <person name="Plunkett G. III"/>
            <person name="Burland V.D."/>
            <person name="Blattner F.R."/>
        </authorList>
    </citation>
    <scope>NUCLEOTIDE SEQUENCE [LARGE SCALE GENOMIC DNA]</scope>
    <source>
        <strain>K12 / MG1655 / ATCC 47076</strain>
    </source>
</reference>
<reference key="3">
    <citation type="journal article" date="1997" name="Science">
        <title>The complete genome sequence of Escherichia coli K-12.</title>
        <authorList>
            <person name="Blattner F.R."/>
            <person name="Plunkett G. III"/>
            <person name="Bloch C.A."/>
            <person name="Perna N.T."/>
            <person name="Burland V."/>
            <person name="Riley M."/>
            <person name="Collado-Vides J."/>
            <person name="Glasner J.D."/>
            <person name="Rode C.K."/>
            <person name="Mayhew G.F."/>
            <person name="Gregor J."/>
            <person name="Davis N.W."/>
            <person name="Kirkpatrick H.A."/>
            <person name="Goeden M.A."/>
            <person name="Rose D.J."/>
            <person name="Mau B."/>
            <person name="Shao Y."/>
        </authorList>
    </citation>
    <scope>NUCLEOTIDE SEQUENCE [LARGE SCALE GENOMIC DNA]</scope>
    <source>
        <strain>K12 / MG1655 / ATCC 47076</strain>
    </source>
</reference>
<reference key="4">
    <citation type="journal article" date="2006" name="Mol. Syst. Biol.">
        <title>Highly accurate genome sequences of Escherichia coli K-12 strains MG1655 and W3110.</title>
        <authorList>
            <person name="Hayashi K."/>
            <person name="Morooka N."/>
            <person name="Yamamoto Y."/>
            <person name="Fujita K."/>
            <person name="Isono K."/>
            <person name="Choi S."/>
            <person name="Ohtsubo E."/>
            <person name="Baba T."/>
            <person name="Wanner B.L."/>
            <person name="Mori H."/>
            <person name="Horiuchi T."/>
        </authorList>
    </citation>
    <scope>NUCLEOTIDE SEQUENCE [LARGE SCALE GENOMIC DNA]</scope>
    <source>
        <strain>K12 / W3110 / ATCC 27325 / DSM 5911</strain>
    </source>
</reference>
<reference key="5">
    <citation type="journal article" date="1990" name="J. Bacteriol.">
        <title>Recombination at ColE1 cer requires the Escherichia coli xerC gene product, a member of the lambda integrase family of site-specific recombinases.</title>
        <authorList>
            <person name="Colloms S.D."/>
            <person name="Sykora P."/>
            <person name="Szatmari G."/>
            <person name="Sherratt D.J."/>
        </authorList>
    </citation>
    <scope>NUCLEOTIDE SEQUENCE [GENOMIC DNA] OF 259-274</scope>
    <source>
        <strain>K12</strain>
    </source>
</reference>
<reference key="6">
    <citation type="journal article" date="1996" name="Biochimie">
        <title>Comparative analysis of the cya locus in enterobacteria and related Gram-negative facultative anaerobes.</title>
        <authorList>
            <person name="Trotot P."/>
            <person name="Sismeiro O."/>
            <person name="Vivares C."/>
            <person name="Glaser P."/>
            <person name="Bresson-Roy A."/>
            <person name="Danchin A."/>
        </authorList>
    </citation>
    <scope>NUCLEOTIDE SEQUENCE [GENOMIC DNA] OF 1-8</scope>
    <source>
        <strain>K12</strain>
    </source>
</reference>
<reference key="7">
    <citation type="journal article" date="1984" name="J. Biol. Chem.">
        <title>Purification and properties of diaminopimelic acid epimerase from Escherichia coli.</title>
        <authorList>
            <person name="Wiseman J.S."/>
            <person name="Nichols J.S."/>
        </authorList>
    </citation>
    <scope>FUNCTION</scope>
    <scope>CATALYTIC ACTIVITY</scope>
    <scope>ACTIVITY REGULATION</scope>
    <scope>BIOPHYSICOCHEMICAL PROPERTIES</scope>
    <scope>SUBUNIT</scope>
</reference>
<reference key="8">
    <citation type="journal article" date="1987" name="J. Bacteriol.">
        <title>Molecular cloning, characterization, and chromosomal localization of dapF, the Escherichia coli gene for diaminopimelate epimerase.</title>
        <authorList>
            <person name="Richaud C."/>
            <person name="Higgins W."/>
            <person name="Mengin-Lecreulx D."/>
            <person name="Stragier P."/>
        </authorList>
    </citation>
    <scope>FUNCTION</scope>
</reference>
<reference key="9">
    <citation type="journal article" date="1988" name="J. Bacteriol.">
        <title>Incorporation of LL-diaminopimelic acid into peptidoglycan of Escherichia coli mutants lacking diaminopimelate epimerase encoded by dapF.</title>
        <authorList>
            <person name="Mengin-Lecreulx D."/>
            <person name="Michaud C."/>
            <person name="Richaud C."/>
            <person name="Blanot D."/>
            <person name="van Heijenoort J."/>
        </authorList>
    </citation>
    <scope>FUNCTION</scope>
    <scope>DISRUPTION PHENOTYPE</scope>
    <scope>PATHWAY</scope>
</reference>
<reference key="10">
    <citation type="journal article" date="1988" name="J. Biol. Chem.">
        <title>Analogs of diaminopimelic acid as inhibitors of meso-diaminopimelate dehydrogenase and LL-diaminopimelate epimerase.</title>
        <authorList>
            <person name="Lam L.K."/>
            <person name="Arnold L.D."/>
            <person name="Kalantar T.H."/>
            <person name="Kelland J.G."/>
            <person name="Lane-Bell P.M."/>
            <person name="Palcic M.M."/>
            <person name="Pickard M.A."/>
            <person name="Vederas J.C."/>
        </authorList>
    </citation>
    <scope>FUNCTION</scope>
    <scope>CATALYTIC ACTIVITY</scope>
    <scope>ACTIVITY REGULATION</scope>
    <scope>BIOPHYSICOCHEMICAL PROPERTIES</scope>
</reference>
<reference key="11">
    <citation type="journal article" date="1990" name="J. Med. Chem.">
        <title>2-(4-Amino-4-carboxybutyl)aziridine-2-carboxylic acid. A potent irreversible inhibitor of diaminopimelic acid epimerase. Spontaneous formation from alpha-(halomethyl)diaminopimelic acids.</title>
        <authorList>
            <person name="Gerhart F."/>
            <person name="Higgins W."/>
            <person name="Tardif C."/>
            <person name="Ducep J.B."/>
        </authorList>
    </citation>
    <scope>ACTIVITY REGULATION</scope>
</reference>
<reference key="12">
    <citation type="journal article" date="2010" name="Acta Crystallogr. F">
        <title>Crystallization and preliminary X-ray diffraction analysis of diaminopimelate epimerase from Escherichia coli.</title>
        <authorList>
            <person name="Hor L."/>
            <person name="Dobson R.C."/>
            <person name="Dogovski C."/>
            <person name="Hutton C.A."/>
            <person name="Perugini M.A."/>
        </authorList>
    </citation>
    <scope>PRELIMINARY CRYSTALLIZATION</scope>
</reference>
<reference key="13">
    <citation type="journal article" date="2013" name="J. Biol. Chem.">
        <title>Dimerization of bacterial diaminopimelate epimerase is essential for catalysis.</title>
        <authorList>
            <person name="Hor L."/>
            <person name="Dobson R.C."/>
            <person name="Downton M.T."/>
            <person name="Wagner J."/>
            <person name="Hutton C.A."/>
            <person name="Perugini M.A."/>
        </authorList>
    </citation>
    <scope>X-RAY CRYSTALLOGRAPHY (2.00 ANGSTROMS)</scope>
    <scope>MUTAGENESIS OF TYR-268</scope>
    <scope>SUBUNIT</scope>
</reference>
<feature type="chain" id="PRO_0000149838" description="Diaminopimelate epimerase">
    <location>
        <begin position="1"/>
        <end position="274"/>
    </location>
</feature>
<feature type="active site" description="Proton donor" evidence="1">
    <location>
        <position position="73"/>
    </location>
</feature>
<feature type="active site" description="Proton acceptor" evidence="1">
    <location>
        <position position="217"/>
    </location>
</feature>
<feature type="binding site" evidence="1">
    <location>
        <position position="11"/>
    </location>
    <ligand>
        <name>substrate</name>
    </ligand>
</feature>
<feature type="binding site" evidence="1">
    <location>
        <position position="44"/>
    </location>
    <ligand>
        <name>substrate</name>
    </ligand>
</feature>
<feature type="binding site" evidence="1">
    <location>
        <position position="64"/>
    </location>
    <ligand>
        <name>substrate</name>
    </ligand>
</feature>
<feature type="binding site" evidence="1">
    <location>
        <begin position="74"/>
        <end position="75"/>
    </location>
    <ligand>
        <name>substrate</name>
    </ligand>
</feature>
<feature type="binding site" evidence="1">
    <location>
        <position position="157"/>
    </location>
    <ligand>
        <name>substrate</name>
    </ligand>
</feature>
<feature type="binding site" evidence="1">
    <location>
        <position position="190"/>
    </location>
    <ligand>
        <name>substrate</name>
    </ligand>
</feature>
<feature type="binding site" evidence="1">
    <location>
        <begin position="208"/>
        <end position="209"/>
    </location>
    <ligand>
        <name>substrate</name>
    </ligand>
</feature>
<feature type="binding site" evidence="1">
    <location>
        <begin position="218"/>
        <end position="219"/>
    </location>
    <ligand>
        <name>substrate</name>
    </ligand>
</feature>
<feature type="site" description="Could be important to modulate the pK values of the two catalytic cysteine residues" evidence="1">
    <location>
        <position position="159"/>
    </location>
</feature>
<feature type="site" description="Could be important to modulate the pK values of the two catalytic cysteine residues" evidence="1">
    <location>
        <position position="208"/>
    </location>
</feature>
<feature type="site" description="Important for dimerization" evidence="3">
    <location>
        <position position="268"/>
    </location>
</feature>
<feature type="mutagenesis site" description="Significantly less active than the wild-type dimer and unable to dimerize." evidence="3">
    <original>Y</original>
    <variation>A</variation>
    <location>
        <position position="268"/>
    </location>
</feature>
<feature type="sequence conflict" description="In Ref. 1; CAA31413." evidence="9" ref="1">
    <original>S</original>
    <variation>T</variation>
    <location>
        <position position="98"/>
    </location>
</feature>
<feature type="sequence conflict" description="In Ref. 1; CAA31413." evidence="9" ref="1">
    <original>CV</original>
    <variation>WL</variation>
    <location>
        <begin position="160"/>
        <end position="161"/>
    </location>
</feature>
<feature type="sequence conflict" description="In Ref. 1; CAA31413." evidence="9" ref="1">
    <original>EH</original>
    <variation>DD</variation>
    <location>
        <begin position="200"/>
        <end position="201"/>
    </location>
</feature>
<feature type="strand" evidence="13">
    <location>
        <begin position="1"/>
        <end position="8"/>
    </location>
</feature>
<feature type="strand" evidence="13">
    <location>
        <begin position="11"/>
        <end position="17"/>
    </location>
</feature>
<feature type="strand" evidence="13">
    <location>
        <begin position="19"/>
        <end position="21"/>
    </location>
</feature>
<feature type="helix" evidence="13">
    <location>
        <begin position="27"/>
        <end position="34"/>
    </location>
</feature>
<feature type="turn" evidence="13">
    <location>
        <begin position="36"/>
        <end position="38"/>
    </location>
</feature>
<feature type="strand" evidence="13">
    <location>
        <begin position="43"/>
        <end position="49"/>
    </location>
</feature>
<feature type="strand" evidence="13">
    <location>
        <begin position="56"/>
        <end position="63"/>
    </location>
</feature>
<feature type="strand" evidence="11">
    <location>
        <begin position="69"/>
        <end position="71"/>
    </location>
</feature>
<feature type="turn" evidence="13">
    <location>
        <begin position="73"/>
        <end position="76"/>
    </location>
</feature>
<feature type="helix" evidence="13">
    <location>
        <begin position="77"/>
        <end position="86"/>
    </location>
</feature>
<feature type="strand" evidence="13">
    <location>
        <begin position="93"/>
        <end position="99"/>
    </location>
</feature>
<feature type="strand" evidence="13">
    <location>
        <begin position="102"/>
        <end position="108"/>
    </location>
</feature>
<feature type="strand" evidence="13">
    <location>
        <begin position="114"/>
        <end position="117"/>
    </location>
</feature>
<feature type="helix" evidence="13">
    <location>
        <begin position="125"/>
        <end position="127"/>
    </location>
</feature>
<feature type="strand" evidence="14">
    <location>
        <begin position="132"/>
        <end position="134"/>
    </location>
</feature>
<feature type="strand" evidence="13">
    <location>
        <begin position="137"/>
        <end position="143"/>
    </location>
</feature>
<feature type="strand" evidence="13">
    <location>
        <begin position="146"/>
        <end position="163"/>
    </location>
</feature>
<feature type="turn" evidence="13">
    <location>
        <begin position="167"/>
        <end position="169"/>
    </location>
</feature>
<feature type="turn" evidence="13">
    <location>
        <begin position="172"/>
        <end position="174"/>
    </location>
</feature>
<feature type="helix" evidence="13">
    <location>
        <begin position="175"/>
        <end position="180"/>
    </location>
</feature>
<feature type="strand" evidence="13">
    <location>
        <begin position="190"/>
        <end position="198"/>
    </location>
</feature>
<feature type="strand" evidence="13">
    <location>
        <begin position="201"/>
        <end position="208"/>
    </location>
</feature>
<feature type="turn" evidence="13">
    <location>
        <begin position="209"/>
        <end position="211"/>
    </location>
</feature>
<feature type="strand" evidence="12">
    <location>
        <begin position="212"/>
        <end position="215"/>
    </location>
</feature>
<feature type="helix" evidence="13">
    <location>
        <begin position="218"/>
        <end position="230"/>
    </location>
</feature>
<feature type="strand" evidence="13">
    <location>
        <begin position="236"/>
        <end position="242"/>
    </location>
</feature>
<feature type="strand" evidence="13">
    <location>
        <begin position="245"/>
        <end position="250"/>
    </location>
</feature>
<feature type="strand" evidence="13">
    <location>
        <begin position="259"/>
        <end position="262"/>
    </location>
</feature>
<feature type="strand" evidence="13">
    <location>
        <begin position="265"/>
        <end position="272"/>
    </location>
</feature>
<protein>
    <recommendedName>
        <fullName evidence="8">Diaminopimelate epimerase</fullName>
        <shortName evidence="8">DAP epimerase</shortName>
        <ecNumber evidence="5 7">5.1.1.7</ecNumber>
    </recommendedName>
    <alternativeName>
        <fullName evidence="1">PLP-independent amino acid racemase</fullName>
    </alternativeName>
</protein>
<name>DAPF_ECOLI</name>
<gene>
    <name evidence="8" type="primary">dapF</name>
    <name type="ordered locus">b3809</name>
    <name type="ordered locus">JW5592</name>
</gene>
<sequence>MQFSKMHGLGNDFMVVDAVTQNVFFSPELIRRLADRHLGVGFDQLLVVEPPYDPELDFHYRIFNADGSEVAQCGNGARCFARFVRLKGLTNKRDIRVSTANGRMVLTVTDDDLVRVNMGEPNFEPSAVPFRANKAEKTYIMRAAEQTILCGVVSMGNPHCVIQVDDVDTAAVETLGPVLESHERFPERANIGFMQVVKREHIRLRVYERGAGETQACGSGACAAVAVGIQQGLLAEEVRVELPGGRLDIAWKGPGHPLYMTGPAVHVYDGFIHL</sequence>
<proteinExistence type="evidence at protein level"/>
<keyword id="KW-0002">3D-structure</keyword>
<keyword id="KW-0028">Amino-acid biosynthesis</keyword>
<keyword id="KW-0963">Cytoplasm</keyword>
<keyword id="KW-0413">Isomerase</keyword>
<keyword id="KW-0457">Lysine biosynthesis</keyword>
<keyword id="KW-1185">Reference proteome</keyword>
<comment type="function">
    <text evidence="4 5 6 7">Involved in the succinylase branch of the L-lysine biosynthesis and in the biosynthesis of the pentapeptide incorporated in the peptidoglycan moiety (PubMed:3283102). Catalyzes the stereoinversion of LL-2,6-diaminopimelate (L,L-DAP) to meso-diaminopimelate (meso-DAP) (PubMed:3031013, PubMed:3042781, PubMed:6378903).</text>
</comment>
<comment type="catalytic activity">
    <reaction evidence="5 7">
        <text>(2S,6S)-2,6-diaminopimelate = meso-2,6-diaminopimelate</text>
        <dbReference type="Rhea" id="RHEA:15393"/>
        <dbReference type="ChEBI" id="CHEBI:57609"/>
        <dbReference type="ChEBI" id="CHEBI:57791"/>
        <dbReference type="EC" id="5.1.1.7"/>
    </reaction>
</comment>
<comment type="activity regulation">
    <text evidence="2 5 7">Inhibited by 2-(4-amino-4-carboxybutyl)aziri-dine-2-carboxylate (aziDAP) and iodoacetamide.</text>
</comment>
<comment type="biophysicochemical properties">
    <kinetics>
        <KM evidence="5 7">0.16 mM for D,L-DAP (at pH 7.8 and at 25 degrees Celsius)</KM>
        <KM evidence="5 7">0.26 mM for L,L-DAP (at pH 7.8 and at 25 degrees Celsius)</KM>
        <KM evidence="5 7">0.36 mM for L,L-DAP (at pH 7.8 and at 25 degrees Celsius)</KM>
    </kinetics>
</comment>
<comment type="pathway">
    <text evidence="10">Amino-acid biosynthesis; L-lysine biosynthesis via DAP pathway; DL-2,6-diaminopimelate from LL-2,6-diaminopimelate: step 1/1.</text>
</comment>
<comment type="subunit">
    <text evidence="3 7">Homodimer.</text>
</comment>
<comment type="subcellular location">
    <subcellularLocation>
        <location evidence="9">Cytoplasm</location>
    </subcellularLocation>
</comment>
<comment type="disruption phenotype">
    <text evidence="6">Cells lacking this gene show an unusual large LL-diaminopimelic acid (LL-DAP) pool and an important variations of the LL-DAP/meso-DAP ratio incorporated in the peptidoglycan.</text>
</comment>
<comment type="miscellaneous">
    <text evidence="7">DapF utilizes a two-base mechanism involving a pair of cysteine residues (Cys-73 and Cys-217).</text>
</comment>
<comment type="similarity">
    <text evidence="9">Belongs to the diaminopimelate epimerase family.</text>
</comment>
<comment type="sequence caution" evidence="9">
    <conflict type="erroneous initiation">
        <sequence resource="EMBL-CDS" id="AAA67605"/>
    </conflict>
    <text>Extended N-terminus.</text>
</comment>
<comment type="sequence caution" evidence="9">
    <conflict type="erroneous initiation">
        <sequence resource="EMBL-CDS" id="CAA31413"/>
    </conflict>
    <text>Extended N-terminus.</text>
</comment>